<organism>
    <name type="scientific">Cricetulus griseus</name>
    <name type="common">Chinese hamster</name>
    <name type="synonym">Cricetulus barabensis griseus</name>
    <dbReference type="NCBI Taxonomy" id="10029"/>
    <lineage>
        <taxon>Eukaryota</taxon>
        <taxon>Metazoa</taxon>
        <taxon>Chordata</taxon>
        <taxon>Craniata</taxon>
        <taxon>Vertebrata</taxon>
        <taxon>Euteleostomi</taxon>
        <taxon>Mammalia</taxon>
        <taxon>Eutheria</taxon>
        <taxon>Euarchontoglires</taxon>
        <taxon>Glires</taxon>
        <taxon>Rodentia</taxon>
        <taxon>Myomorpha</taxon>
        <taxon>Muroidea</taxon>
        <taxon>Cricetidae</taxon>
        <taxon>Cricetinae</taxon>
        <taxon>Cricetulus</taxon>
    </lineage>
</organism>
<reference key="1">
    <citation type="journal article" date="2005" name="Exp. Cell Res.">
        <title>A temperature-sensitive mutation in the WD repeat-containing protein Smu1 is related to maintenance of chromosome integrity.</title>
        <authorList>
            <person name="Sugaya K."/>
            <person name="Hongo E."/>
            <person name="Tsuji H."/>
        </authorList>
    </citation>
    <scope>NUCLEOTIDE SEQUENCE [MRNA]</scope>
    <scope>FUNCTION</scope>
    <scope>MUTAGENESIS OF GLY-489</scope>
</reference>
<reference key="2">
    <citation type="journal article" date="2006" name="J. Cell Sci.">
        <title>The conserved role of Smu1 in splicing is characterized in its mammalian temperature-sensitive mutant.</title>
        <authorList>
            <person name="Sugaya K."/>
            <person name="Hongo E."/>
            <person name="Ishihara Y."/>
            <person name="Tsuji H."/>
        </authorList>
    </citation>
    <scope>FUNCTION</scope>
</reference>
<reference key="3">
    <citation type="journal article" date="2011" name="RNA Biol.">
        <title>Enlargement of speckles of SF2/ASF due to loss of function of Smu1 is characterized in the mammalian temperature-sensitive mutant.</title>
        <authorList>
            <person name="Sugaya K."/>
            <person name="Ishihara Y."/>
            <person name="Sugaya K."/>
        </authorList>
    </citation>
    <scope>FUNCTION</scope>
    <scope>SUBCELLULAR LOCATION</scope>
</reference>
<dbReference type="EMBL" id="AB111945">
    <property type="protein sequence ID" value="BAD04854.1"/>
    <property type="molecule type" value="mRNA"/>
</dbReference>
<dbReference type="RefSeq" id="NP_001231781.1">
    <property type="nucleotide sequence ID" value="NM_001244852.1"/>
</dbReference>
<dbReference type="SMR" id="Q76B40"/>
<dbReference type="PaxDb" id="10029-NP_001231781.1"/>
<dbReference type="GeneID" id="100736555"/>
<dbReference type="KEGG" id="cge:100736555"/>
<dbReference type="CTD" id="55234"/>
<dbReference type="eggNOG" id="KOG0275">
    <property type="taxonomic scope" value="Eukaryota"/>
</dbReference>
<dbReference type="OrthoDB" id="538223at2759"/>
<dbReference type="Proteomes" id="UP000694386">
    <property type="component" value="Unplaced"/>
</dbReference>
<dbReference type="Proteomes" id="UP001108280">
    <property type="component" value="Chromosome 2"/>
</dbReference>
<dbReference type="GO" id="GO:0005737">
    <property type="term" value="C:cytoplasm"/>
    <property type="evidence" value="ECO:0007669"/>
    <property type="project" value="UniProtKB-SubCell"/>
</dbReference>
<dbReference type="GO" id="GO:0016607">
    <property type="term" value="C:nuclear speck"/>
    <property type="evidence" value="ECO:0000314"/>
    <property type="project" value="UniProtKB"/>
</dbReference>
<dbReference type="GO" id="GO:0071005">
    <property type="term" value="C:U2-type precatalytic spliceosome"/>
    <property type="evidence" value="ECO:0000250"/>
    <property type="project" value="UniProtKB"/>
</dbReference>
<dbReference type="GO" id="GO:0000398">
    <property type="term" value="P:mRNA splicing, via spliceosome"/>
    <property type="evidence" value="ECO:0000250"/>
    <property type="project" value="UniProtKB"/>
</dbReference>
<dbReference type="GO" id="GO:0000381">
    <property type="term" value="P:regulation of alternative mRNA splicing, via spliceosome"/>
    <property type="evidence" value="ECO:0000315"/>
    <property type="project" value="UniProtKB"/>
</dbReference>
<dbReference type="CDD" id="cd00200">
    <property type="entry name" value="WD40"/>
    <property type="match status" value="1"/>
</dbReference>
<dbReference type="FunFam" id="2.130.10.10:FF:000729">
    <property type="entry name" value="SMU1, DNA replication regulator and spliceosomal factor"/>
    <property type="match status" value="1"/>
</dbReference>
<dbReference type="FunFam" id="2.130.10.10:FF:000754">
    <property type="entry name" value="SMU1, DNA replication regulator and spliceosomal factor"/>
    <property type="match status" value="1"/>
</dbReference>
<dbReference type="FunFam" id="2.130.10.10:FF:000082">
    <property type="entry name" value="WD40 repeat-containing protein SMU1"/>
    <property type="match status" value="1"/>
</dbReference>
<dbReference type="Gene3D" id="2.130.10.10">
    <property type="entry name" value="YVTN repeat-like/Quinoprotein amine dehydrogenase"/>
    <property type="match status" value="3"/>
</dbReference>
<dbReference type="InterPro" id="IPR006595">
    <property type="entry name" value="CTLH_C"/>
</dbReference>
<dbReference type="InterPro" id="IPR020472">
    <property type="entry name" value="G-protein_beta_WD-40_rep"/>
</dbReference>
<dbReference type="InterPro" id="IPR006594">
    <property type="entry name" value="LisH"/>
</dbReference>
<dbReference type="InterPro" id="IPR045184">
    <property type="entry name" value="SMU1"/>
</dbReference>
<dbReference type="InterPro" id="IPR054532">
    <property type="entry name" value="TPL_SMU1_LisH-like"/>
</dbReference>
<dbReference type="InterPro" id="IPR015943">
    <property type="entry name" value="WD40/YVTN_repeat-like_dom_sf"/>
</dbReference>
<dbReference type="InterPro" id="IPR019775">
    <property type="entry name" value="WD40_repeat_CS"/>
</dbReference>
<dbReference type="InterPro" id="IPR036322">
    <property type="entry name" value="WD40_repeat_dom_sf"/>
</dbReference>
<dbReference type="InterPro" id="IPR001680">
    <property type="entry name" value="WD40_rpt"/>
</dbReference>
<dbReference type="PANTHER" id="PTHR22848">
    <property type="entry name" value="WD40 REPEAT PROTEIN"/>
    <property type="match status" value="1"/>
</dbReference>
<dbReference type="Pfam" id="PF17814">
    <property type="entry name" value="LisH_TPL"/>
    <property type="match status" value="1"/>
</dbReference>
<dbReference type="Pfam" id="PF00400">
    <property type="entry name" value="WD40"/>
    <property type="match status" value="5"/>
</dbReference>
<dbReference type="PRINTS" id="PR00320">
    <property type="entry name" value="GPROTEINBRPT"/>
</dbReference>
<dbReference type="SMART" id="SM00668">
    <property type="entry name" value="CTLH"/>
    <property type="match status" value="1"/>
</dbReference>
<dbReference type="SMART" id="SM00667">
    <property type="entry name" value="LisH"/>
    <property type="match status" value="1"/>
</dbReference>
<dbReference type="SMART" id="SM00320">
    <property type="entry name" value="WD40"/>
    <property type="match status" value="7"/>
</dbReference>
<dbReference type="SUPFAM" id="SSF50978">
    <property type="entry name" value="WD40 repeat-like"/>
    <property type="match status" value="1"/>
</dbReference>
<dbReference type="PROSITE" id="PS50897">
    <property type="entry name" value="CTLH"/>
    <property type="match status" value="1"/>
</dbReference>
<dbReference type="PROSITE" id="PS50896">
    <property type="entry name" value="LISH"/>
    <property type="match status" value="1"/>
</dbReference>
<dbReference type="PROSITE" id="PS00678">
    <property type="entry name" value="WD_REPEATS_1"/>
    <property type="match status" value="2"/>
</dbReference>
<dbReference type="PROSITE" id="PS50082">
    <property type="entry name" value="WD_REPEATS_2"/>
    <property type="match status" value="5"/>
</dbReference>
<dbReference type="PROSITE" id="PS50294">
    <property type="entry name" value="WD_REPEATS_REGION"/>
    <property type="match status" value="1"/>
</dbReference>
<evidence type="ECO:0000250" key="1">
    <source>
        <dbReference type="UniProtKB" id="G5EEG7"/>
    </source>
</evidence>
<evidence type="ECO:0000250" key="2">
    <source>
        <dbReference type="UniProtKB" id="Q2TAY7"/>
    </source>
</evidence>
<evidence type="ECO:0000250" key="3">
    <source>
        <dbReference type="UniProtKB" id="Q99M63"/>
    </source>
</evidence>
<evidence type="ECO:0000255" key="4"/>
<evidence type="ECO:0000255" key="5">
    <source>
        <dbReference type="PROSITE-ProRule" id="PRU00058"/>
    </source>
</evidence>
<evidence type="ECO:0000255" key="6">
    <source>
        <dbReference type="PROSITE-ProRule" id="PRU00126"/>
    </source>
</evidence>
<evidence type="ECO:0000269" key="7">
    <source>
    </source>
</evidence>
<evidence type="ECO:0000269" key="8">
    <source>
    </source>
</evidence>
<evidence type="ECO:0000269" key="9">
    <source>
    </source>
</evidence>
<evidence type="ECO:0000305" key="10"/>
<evidence type="ECO:0000305" key="11">
    <source>
    </source>
</evidence>
<proteinExistence type="evidence at protein level"/>
<name>SMU1_CRIGR</name>
<protein>
    <recommendedName>
        <fullName>WD40 repeat-containing protein SMU1</fullName>
    </recommendedName>
    <alternativeName>
        <fullName>Smu-1 suppressor of mec-8 and unc-52 protein homolog</fullName>
    </alternativeName>
    <component>
        <recommendedName>
            <fullName>WD40 repeat-containing protein SMU1, N-terminally processed</fullName>
        </recommendedName>
    </component>
</protein>
<accession>Q76B40</accession>
<keyword id="KW-0007">Acetylation</keyword>
<keyword id="KW-0963">Cytoplasm</keyword>
<keyword id="KW-1017">Isopeptide bond</keyword>
<keyword id="KW-0507">mRNA processing</keyword>
<keyword id="KW-0508">mRNA splicing</keyword>
<keyword id="KW-0539">Nucleus</keyword>
<keyword id="KW-0677">Repeat</keyword>
<keyword id="KW-0747">Spliceosome</keyword>
<keyword id="KW-0832">Ubl conjugation</keyword>
<keyword id="KW-0853">WD repeat</keyword>
<sequence>MSIEIESSDVIRLIMQYLKENSLHRALATLQEETTVSLNTVDSIESFVADINSGHWDTVLQAIQSLKLPDKTLIDLYEQVVLELIELRELGAARSLLRQTDPMIMLKQTQPERYIHLENLLARSYFDPREAYPDGSSKEKRRAAIAQALAGEVSVVPPSRLMALLGQALKWQQHQGLLPPGMTIDLFRGKAAVKDVEEEKFPTQLSRHIKFGQKSHVECARFSPDGQYLVTGSVDGFIEVWNFTTGKIRKDLKYQAQDNFMMMDDAVLCMCFSRDTEMLATGAQDGKIKVWKIQSGQCLRRFERAHSKGVTCLSFSKDSSQILSASFDQTIRIHGLKSGKTLKEFRGHSSFVNEATFTQDGHYIISASSDGTVKIWNMKTTECSNTFKSLGSTAGTDITVNSVILLPKNPEHFVVCNRSNTVVIMNMQGQIVRSFSSGKREGGDFVCCALSPRGEWIYCVGEDFVLYCFSTVTGKLERTLTVHEKDVIGIAHHPHQNLIATYSEDGLLKLWKP</sequence>
<comment type="function">
    <text evidence="2 7 8 11">Involved in pre-mRNA splicing as a component of the spliceosome (Probable). Regulates alternative splicing of the HSPG2 pre-mRNA (PubMed:17105761). Required for normal accumulation of IK (By similarity). Required for normal mitotic spindle assembly and normal progress through mitosis (PubMed:15878348).</text>
</comment>
<comment type="subunit">
    <text evidence="2">Component of the spliceosome B complex. Interacts with IK.</text>
</comment>
<comment type="subcellular location">
    <subcellularLocation>
        <location evidence="3">Cytoplasm</location>
    </subcellularLocation>
    <subcellularLocation>
        <location evidence="9">Nucleus</location>
    </subcellularLocation>
    <subcellularLocation>
        <location evidence="9">Nucleus speckle</location>
    </subcellularLocation>
    <text evidence="9">Colocalizes with SRSF1 in nuclear speckles.</text>
</comment>
<comment type="domain">
    <text evidence="1">The WD repeats assemble into a seven-bladed WD propeller.</text>
</comment>
<comment type="similarity">
    <text evidence="10">Belongs to the WD repeat SMU1 family.</text>
</comment>
<feature type="chain" id="PRO_0000424519" description="WD40 repeat-containing protein SMU1">
    <location>
        <begin position="1"/>
        <end position="513"/>
    </location>
</feature>
<feature type="initiator methionine" description="Removed; alternate" evidence="2">
    <location>
        <position position="1"/>
    </location>
</feature>
<feature type="chain" id="PRO_0000237589" description="WD40 repeat-containing protein SMU1, N-terminally processed">
    <location>
        <begin position="2"/>
        <end position="513"/>
    </location>
</feature>
<feature type="domain" description="LisH" evidence="6">
    <location>
        <begin position="6"/>
        <end position="38"/>
    </location>
</feature>
<feature type="domain" description="CTLH" evidence="5">
    <location>
        <begin position="40"/>
        <end position="92"/>
    </location>
</feature>
<feature type="repeat" description="WD 1" evidence="4">
    <location>
        <begin position="212"/>
        <end position="253"/>
    </location>
</feature>
<feature type="repeat" description="WD 2" evidence="4">
    <location>
        <begin position="262"/>
        <end position="303"/>
    </location>
</feature>
<feature type="repeat" description="WD 3" evidence="4">
    <location>
        <begin position="305"/>
        <end position="346"/>
    </location>
</feature>
<feature type="repeat" description="WD 4" evidence="4">
    <location>
        <begin position="347"/>
        <end position="386"/>
    </location>
</feature>
<feature type="repeat" description="WD 5" evidence="4">
    <location>
        <begin position="395"/>
        <end position="436"/>
    </location>
</feature>
<feature type="repeat" description="WD 6" evidence="4">
    <location>
        <begin position="440"/>
        <end position="479"/>
    </location>
</feature>
<feature type="repeat" description="WD 7" evidence="4">
    <location>
        <begin position="482"/>
        <end position="513"/>
    </location>
</feature>
<feature type="region of interest" description="Required for interaction with IK" evidence="2">
    <location>
        <begin position="2"/>
        <end position="315"/>
    </location>
</feature>
<feature type="modified residue" description="N-acetylmethionine" evidence="2">
    <location>
        <position position="1"/>
    </location>
</feature>
<feature type="modified residue" description="N-acetylserine; in WD40 repeat-containing protein SMU1, N-terminally processed" evidence="2">
    <location>
        <position position="2"/>
    </location>
</feature>
<feature type="cross-link" description="Glycyl lysine isopeptide (Lys-Gly) (interchain with G-Cter in SUMO2)" evidence="2">
    <location>
        <position position="379"/>
    </location>
</feature>
<feature type="mutagenesis site" description="Temperature-sensitive mutation in tsTM18 cell line with chromosomal instability and cell cycle arrest at S and G2 phases with decreased DNA synthesis at the nonpermissive temperature of 39 degrees Celsius." evidence="7">
    <original>G</original>
    <variation>R</variation>
    <location>
        <position position="489"/>
    </location>
</feature>
<gene>
    <name type="primary">SMU1</name>
</gene>